<gene>
    <name evidence="1" type="primary">hdfR</name>
    <name type="ordered locus">SSPA3481</name>
</gene>
<dbReference type="EMBL" id="FM200053">
    <property type="protein sequence ID" value="CAR61758.1"/>
    <property type="molecule type" value="Genomic_DNA"/>
</dbReference>
<dbReference type="SMR" id="B5BIR0"/>
<dbReference type="KEGG" id="sek:SSPA3481"/>
<dbReference type="HOGENOM" id="CLU_039613_8_2_6"/>
<dbReference type="Proteomes" id="UP000001869">
    <property type="component" value="Chromosome"/>
</dbReference>
<dbReference type="GO" id="GO:0003677">
    <property type="term" value="F:DNA binding"/>
    <property type="evidence" value="ECO:0007669"/>
    <property type="project" value="UniProtKB-KW"/>
</dbReference>
<dbReference type="GO" id="GO:0003700">
    <property type="term" value="F:DNA-binding transcription factor activity"/>
    <property type="evidence" value="ECO:0007669"/>
    <property type="project" value="UniProtKB-UniRule"/>
</dbReference>
<dbReference type="GO" id="GO:0045892">
    <property type="term" value="P:negative regulation of DNA-templated transcription"/>
    <property type="evidence" value="ECO:0007669"/>
    <property type="project" value="UniProtKB-UniRule"/>
</dbReference>
<dbReference type="FunFam" id="1.10.10.10:FF:000001">
    <property type="entry name" value="LysR family transcriptional regulator"/>
    <property type="match status" value="1"/>
</dbReference>
<dbReference type="Gene3D" id="1.10.10.10">
    <property type="entry name" value="Winged helix-like DNA-binding domain superfamily/Winged helix DNA-binding domain"/>
    <property type="match status" value="1"/>
</dbReference>
<dbReference type="HAMAP" id="MF_01233">
    <property type="entry name" value="HTH_type_HdfR"/>
    <property type="match status" value="1"/>
</dbReference>
<dbReference type="InterPro" id="IPR050176">
    <property type="entry name" value="LTTR"/>
</dbReference>
<dbReference type="InterPro" id="IPR005119">
    <property type="entry name" value="LysR_subst-bd"/>
</dbReference>
<dbReference type="InterPro" id="IPR020890">
    <property type="entry name" value="Tscrpt_reg_HTH_HdfR"/>
</dbReference>
<dbReference type="InterPro" id="IPR000847">
    <property type="entry name" value="Tscrpt_reg_HTH_LysR"/>
</dbReference>
<dbReference type="InterPro" id="IPR036388">
    <property type="entry name" value="WH-like_DNA-bd_sf"/>
</dbReference>
<dbReference type="InterPro" id="IPR036390">
    <property type="entry name" value="WH_DNA-bd_sf"/>
</dbReference>
<dbReference type="NCBIfam" id="NF002946">
    <property type="entry name" value="PRK03601.1"/>
    <property type="match status" value="1"/>
</dbReference>
<dbReference type="PANTHER" id="PTHR30579:SF8">
    <property type="entry name" value="HTH-TYPE TRANSCRIPTIONAL REGULATOR HDFR"/>
    <property type="match status" value="1"/>
</dbReference>
<dbReference type="PANTHER" id="PTHR30579">
    <property type="entry name" value="TRANSCRIPTIONAL REGULATOR"/>
    <property type="match status" value="1"/>
</dbReference>
<dbReference type="Pfam" id="PF00126">
    <property type="entry name" value="HTH_1"/>
    <property type="match status" value="1"/>
</dbReference>
<dbReference type="Pfam" id="PF03466">
    <property type="entry name" value="LysR_substrate"/>
    <property type="match status" value="1"/>
</dbReference>
<dbReference type="PRINTS" id="PR00039">
    <property type="entry name" value="HTHLYSR"/>
</dbReference>
<dbReference type="SUPFAM" id="SSF53850">
    <property type="entry name" value="Periplasmic binding protein-like II"/>
    <property type="match status" value="1"/>
</dbReference>
<dbReference type="SUPFAM" id="SSF46785">
    <property type="entry name" value="Winged helix' DNA-binding domain"/>
    <property type="match status" value="1"/>
</dbReference>
<dbReference type="PROSITE" id="PS50931">
    <property type="entry name" value="HTH_LYSR"/>
    <property type="match status" value="1"/>
</dbReference>
<reference key="1">
    <citation type="journal article" date="2009" name="BMC Genomics">
        <title>Pseudogene accumulation in the evolutionary histories of Salmonella enterica serovars Paratyphi A and Typhi.</title>
        <authorList>
            <person name="Holt K.E."/>
            <person name="Thomson N.R."/>
            <person name="Wain J."/>
            <person name="Langridge G.C."/>
            <person name="Hasan R."/>
            <person name="Bhutta Z.A."/>
            <person name="Quail M.A."/>
            <person name="Norbertczak H."/>
            <person name="Walker D."/>
            <person name="Simmonds M."/>
            <person name="White B."/>
            <person name="Bason N."/>
            <person name="Mungall K."/>
            <person name="Dougan G."/>
            <person name="Parkhill J."/>
        </authorList>
    </citation>
    <scope>NUCLEOTIDE SEQUENCE [LARGE SCALE GENOMIC DNA]</scope>
    <source>
        <strain>AKU_12601</strain>
    </source>
</reference>
<protein>
    <recommendedName>
        <fullName evidence="1">HTH-type transcriptional regulator HdfR</fullName>
    </recommendedName>
    <alternativeName>
        <fullName evidence="1">H-NS-dependent flhDC regulator</fullName>
    </alternativeName>
</protein>
<feature type="chain" id="PRO_1000139675" description="HTH-type transcriptional regulator HdfR">
    <location>
        <begin position="1"/>
        <end position="278"/>
    </location>
</feature>
<feature type="domain" description="HTH lysR-type" evidence="1">
    <location>
        <begin position="1"/>
        <end position="58"/>
    </location>
</feature>
<feature type="DNA-binding region" description="H-T-H motif" evidence="1">
    <location>
        <begin position="18"/>
        <end position="37"/>
    </location>
</feature>
<accession>B5BIR0</accession>
<keyword id="KW-0238">DNA-binding</keyword>
<keyword id="KW-0678">Repressor</keyword>
<keyword id="KW-0804">Transcription</keyword>
<keyword id="KW-0805">Transcription regulation</keyword>
<sequence length="278" mass="31604">MDTELLKTFLEVSRTRHFGRAAEALYLTQSAVSFRIRQLENQLGVNLFTRHRNNIRLTTAGEKLLPYAETLMNTWQAARKEVAHTSRHNEFSIGASASLWECMLNAWLGRLYQLQEPQSGLQFEARIAQRQSLVKQLHERQLDLLITTEAPKMDEFSSQLLGHFTLALYCSSPARKKSELNYLRLEWGPDFQQHETGLIAADEVPVLTTSSAELARQQLSALNGCSWLPVNWANEKGGLHTVADSATLSRPLYAIWLQNSDKYSLICDLLKTDVLDEQ</sequence>
<organism>
    <name type="scientific">Salmonella paratyphi A (strain AKU_12601)</name>
    <dbReference type="NCBI Taxonomy" id="554290"/>
    <lineage>
        <taxon>Bacteria</taxon>
        <taxon>Pseudomonadati</taxon>
        <taxon>Pseudomonadota</taxon>
        <taxon>Gammaproteobacteria</taxon>
        <taxon>Enterobacterales</taxon>
        <taxon>Enterobacteriaceae</taxon>
        <taxon>Salmonella</taxon>
    </lineage>
</organism>
<proteinExistence type="inferred from homology"/>
<comment type="function">
    <text evidence="1">Negatively regulates the transcription of the flagellar master operon flhDC by binding to the upstream region of the operon.</text>
</comment>
<comment type="similarity">
    <text evidence="2">Belongs to the LysR transcriptional regulatory family.</text>
</comment>
<name>HDFR_SALPK</name>
<evidence type="ECO:0000255" key="1">
    <source>
        <dbReference type="HAMAP-Rule" id="MF_01233"/>
    </source>
</evidence>
<evidence type="ECO:0000305" key="2"/>